<gene>
    <name evidence="1" type="primary">rlmN</name>
    <name type="ordered locus">PP_0850</name>
</gene>
<comment type="function">
    <text evidence="1">Specifically methylates position 2 of adenine 2503 in 23S rRNA and position 2 of adenine 37 in tRNAs. m2A2503 modification seems to play a crucial role in the proofreading step occurring at the peptidyl transferase center and thus would serve to optimize ribosomal fidelity.</text>
</comment>
<comment type="catalytic activity">
    <reaction evidence="1">
        <text>adenosine(2503) in 23S rRNA + 2 reduced [2Fe-2S]-[ferredoxin] + 2 S-adenosyl-L-methionine = 2-methyladenosine(2503) in 23S rRNA + 5'-deoxyadenosine + L-methionine + 2 oxidized [2Fe-2S]-[ferredoxin] + S-adenosyl-L-homocysteine</text>
        <dbReference type="Rhea" id="RHEA:42916"/>
        <dbReference type="Rhea" id="RHEA-COMP:10000"/>
        <dbReference type="Rhea" id="RHEA-COMP:10001"/>
        <dbReference type="Rhea" id="RHEA-COMP:10152"/>
        <dbReference type="Rhea" id="RHEA-COMP:10282"/>
        <dbReference type="ChEBI" id="CHEBI:17319"/>
        <dbReference type="ChEBI" id="CHEBI:33737"/>
        <dbReference type="ChEBI" id="CHEBI:33738"/>
        <dbReference type="ChEBI" id="CHEBI:57844"/>
        <dbReference type="ChEBI" id="CHEBI:57856"/>
        <dbReference type="ChEBI" id="CHEBI:59789"/>
        <dbReference type="ChEBI" id="CHEBI:74411"/>
        <dbReference type="ChEBI" id="CHEBI:74497"/>
        <dbReference type="EC" id="2.1.1.192"/>
    </reaction>
</comment>
<comment type="catalytic activity">
    <reaction evidence="1">
        <text>adenosine(37) in tRNA + 2 reduced [2Fe-2S]-[ferredoxin] + 2 S-adenosyl-L-methionine = 2-methyladenosine(37) in tRNA + 5'-deoxyadenosine + L-methionine + 2 oxidized [2Fe-2S]-[ferredoxin] + S-adenosyl-L-homocysteine</text>
        <dbReference type="Rhea" id="RHEA:43332"/>
        <dbReference type="Rhea" id="RHEA-COMP:10000"/>
        <dbReference type="Rhea" id="RHEA-COMP:10001"/>
        <dbReference type="Rhea" id="RHEA-COMP:10162"/>
        <dbReference type="Rhea" id="RHEA-COMP:10485"/>
        <dbReference type="ChEBI" id="CHEBI:17319"/>
        <dbReference type="ChEBI" id="CHEBI:33737"/>
        <dbReference type="ChEBI" id="CHEBI:33738"/>
        <dbReference type="ChEBI" id="CHEBI:57844"/>
        <dbReference type="ChEBI" id="CHEBI:57856"/>
        <dbReference type="ChEBI" id="CHEBI:59789"/>
        <dbReference type="ChEBI" id="CHEBI:74411"/>
        <dbReference type="ChEBI" id="CHEBI:74497"/>
        <dbReference type="EC" id="2.1.1.192"/>
    </reaction>
</comment>
<comment type="cofactor">
    <cofactor evidence="1">
        <name>[4Fe-4S] cluster</name>
        <dbReference type="ChEBI" id="CHEBI:49883"/>
    </cofactor>
    <text evidence="1">Binds 1 [4Fe-4S] cluster. The cluster is coordinated with 3 cysteines and an exchangeable S-adenosyl-L-methionine.</text>
</comment>
<comment type="subcellular location">
    <subcellularLocation>
        <location evidence="1">Cytoplasm</location>
    </subcellularLocation>
</comment>
<comment type="miscellaneous">
    <text evidence="1">Reaction proceeds by a ping-pong mechanism involving intermediate methylation of a conserved cysteine residue.</text>
</comment>
<comment type="similarity">
    <text evidence="1">Belongs to the radical SAM superfamily. RlmN family.</text>
</comment>
<proteinExistence type="inferred from homology"/>
<accession>Q88PK0</accession>
<name>RLMN_PSEPK</name>
<reference key="1">
    <citation type="journal article" date="2002" name="Environ. Microbiol.">
        <title>Complete genome sequence and comparative analysis of the metabolically versatile Pseudomonas putida KT2440.</title>
        <authorList>
            <person name="Nelson K.E."/>
            <person name="Weinel C."/>
            <person name="Paulsen I.T."/>
            <person name="Dodson R.J."/>
            <person name="Hilbert H."/>
            <person name="Martins dos Santos V.A.P."/>
            <person name="Fouts D.E."/>
            <person name="Gill S.R."/>
            <person name="Pop M."/>
            <person name="Holmes M."/>
            <person name="Brinkac L.M."/>
            <person name="Beanan M.J."/>
            <person name="DeBoy R.T."/>
            <person name="Daugherty S.C."/>
            <person name="Kolonay J.F."/>
            <person name="Madupu R."/>
            <person name="Nelson W.C."/>
            <person name="White O."/>
            <person name="Peterson J.D."/>
            <person name="Khouri H.M."/>
            <person name="Hance I."/>
            <person name="Chris Lee P."/>
            <person name="Holtzapple E.K."/>
            <person name="Scanlan D."/>
            <person name="Tran K."/>
            <person name="Moazzez A."/>
            <person name="Utterback T.R."/>
            <person name="Rizzo M."/>
            <person name="Lee K."/>
            <person name="Kosack D."/>
            <person name="Moestl D."/>
            <person name="Wedler H."/>
            <person name="Lauber J."/>
            <person name="Stjepandic D."/>
            <person name="Hoheisel J."/>
            <person name="Straetz M."/>
            <person name="Heim S."/>
            <person name="Kiewitz C."/>
            <person name="Eisen J.A."/>
            <person name="Timmis K.N."/>
            <person name="Duesterhoeft A."/>
            <person name="Tuemmler B."/>
            <person name="Fraser C.M."/>
        </authorList>
    </citation>
    <scope>NUCLEOTIDE SEQUENCE [LARGE SCALE GENOMIC DNA]</scope>
    <source>
        <strain>ATCC 47054 / DSM 6125 / CFBP 8728 / NCIMB 11950 / KT2440</strain>
    </source>
</reference>
<keyword id="KW-0004">4Fe-4S</keyword>
<keyword id="KW-0963">Cytoplasm</keyword>
<keyword id="KW-1015">Disulfide bond</keyword>
<keyword id="KW-0408">Iron</keyword>
<keyword id="KW-0411">Iron-sulfur</keyword>
<keyword id="KW-0479">Metal-binding</keyword>
<keyword id="KW-0489">Methyltransferase</keyword>
<keyword id="KW-1185">Reference proteome</keyword>
<keyword id="KW-0698">rRNA processing</keyword>
<keyword id="KW-0949">S-adenosyl-L-methionine</keyword>
<keyword id="KW-0808">Transferase</keyword>
<keyword id="KW-0819">tRNA processing</keyword>
<evidence type="ECO:0000255" key="1">
    <source>
        <dbReference type="HAMAP-Rule" id="MF_01849"/>
    </source>
</evidence>
<evidence type="ECO:0000255" key="2">
    <source>
        <dbReference type="PROSITE-ProRule" id="PRU01266"/>
    </source>
</evidence>
<sequence length="381" mass="41914">MTTSTGKINLLGLTQPEMEQFFDSIGEKRFRAGQVMKWIHHFGVSDFAAMTNVGKVLREKLEAVAEIRPPEVVSEDISADGTRKWVIRVASGSCVETVYIPTDDRGTLCVSSQAGCALDCSFCSTGKQGFNSNLTAAEVIGQVWLANKSFGTVPAKVDRAITNVVMMGMGEPLLNFDNVIAAMKIMMDDLGYGISKRRVTLSTSGVVPMIDELAKHIDVSLALSLHAPNDELRNKLVPINKKYPLKVLLESCMGYMSTLGGKRVLTVEYTLLKDVNDQPEHAAQMIELLRDVPCKINLIPFNPFPHSGYERPSNNAIRRFQDLLHHGGFNVTTRTTRGDDIDAACGQLVGQVNDRTRRSERYIAVRQLSADVELPDSAASH</sequence>
<protein>
    <recommendedName>
        <fullName evidence="1">Dual-specificity RNA methyltransferase RlmN</fullName>
        <ecNumber evidence="1">2.1.1.192</ecNumber>
    </recommendedName>
    <alternativeName>
        <fullName evidence="1">23S rRNA (adenine(2503)-C(2))-methyltransferase</fullName>
    </alternativeName>
    <alternativeName>
        <fullName evidence="1">23S rRNA m2A2503 methyltransferase</fullName>
    </alternativeName>
    <alternativeName>
        <fullName evidence="1">Ribosomal RNA large subunit methyltransferase N</fullName>
    </alternativeName>
    <alternativeName>
        <fullName evidence="1">tRNA (adenine(37)-C(2))-methyltransferase</fullName>
    </alternativeName>
    <alternativeName>
        <fullName evidence="1">tRNA m2A37 methyltransferase</fullName>
    </alternativeName>
</protein>
<feature type="chain" id="PRO_0000350342" description="Dual-specificity RNA methyltransferase RlmN">
    <location>
        <begin position="1"/>
        <end position="381"/>
    </location>
</feature>
<feature type="domain" description="Radical SAM core" evidence="2">
    <location>
        <begin position="102"/>
        <end position="342"/>
    </location>
</feature>
<feature type="active site" description="Proton acceptor" evidence="1">
    <location>
        <position position="96"/>
    </location>
</feature>
<feature type="active site" description="S-methylcysteine intermediate" evidence="1">
    <location>
        <position position="345"/>
    </location>
</feature>
<feature type="binding site" evidence="1">
    <location>
        <position position="116"/>
    </location>
    <ligand>
        <name>[4Fe-4S] cluster</name>
        <dbReference type="ChEBI" id="CHEBI:49883"/>
        <note>4Fe-4S-S-AdoMet</note>
    </ligand>
</feature>
<feature type="binding site" evidence="1">
    <location>
        <position position="120"/>
    </location>
    <ligand>
        <name>[4Fe-4S] cluster</name>
        <dbReference type="ChEBI" id="CHEBI:49883"/>
        <note>4Fe-4S-S-AdoMet</note>
    </ligand>
</feature>
<feature type="binding site" evidence="1">
    <location>
        <position position="123"/>
    </location>
    <ligand>
        <name>[4Fe-4S] cluster</name>
        <dbReference type="ChEBI" id="CHEBI:49883"/>
        <note>4Fe-4S-S-AdoMet</note>
    </ligand>
</feature>
<feature type="binding site" evidence="1">
    <location>
        <begin position="170"/>
        <end position="171"/>
    </location>
    <ligand>
        <name>S-adenosyl-L-methionine</name>
        <dbReference type="ChEBI" id="CHEBI:59789"/>
    </ligand>
</feature>
<feature type="binding site" evidence="1">
    <location>
        <position position="202"/>
    </location>
    <ligand>
        <name>S-adenosyl-L-methionine</name>
        <dbReference type="ChEBI" id="CHEBI:59789"/>
    </ligand>
</feature>
<feature type="binding site" evidence="1">
    <location>
        <begin position="224"/>
        <end position="226"/>
    </location>
    <ligand>
        <name>S-adenosyl-L-methionine</name>
        <dbReference type="ChEBI" id="CHEBI:59789"/>
    </ligand>
</feature>
<feature type="binding site" evidence="1">
    <location>
        <position position="302"/>
    </location>
    <ligand>
        <name>S-adenosyl-L-methionine</name>
        <dbReference type="ChEBI" id="CHEBI:59789"/>
    </ligand>
</feature>
<feature type="disulfide bond" description="(transient)" evidence="1">
    <location>
        <begin position="109"/>
        <end position="345"/>
    </location>
</feature>
<dbReference type="EC" id="2.1.1.192" evidence="1"/>
<dbReference type="EMBL" id="AE015451">
    <property type="protein sequence ID" value="AAN66475.1"/>
    <property type="molecule type" value="Genomic_DNA"/>
</dbReference>
<dbReference type="RefSeq" id="NP_743011.1">
    <property type="nucleotide sequence ID" value="NC_002947.4"/>
</dbReference>
<dbReference type="RefSeq" id="WP_010952067.1">
    <property type="nucleotide sequence ID" value="NZ_CP169744.1"/>
</dbReference>
<dbReference type="SMR" id="Q88PK0"/>
<dbReference type="STRING" id="160488.PP_0850"/>
<dbReference type="PaxDb" id="160488-PP_0850"/>
<dbReference type="GeneID" id="83678203"/>
<dbReference type="KEGG" id="ppu:PP_0850"/>
<dbReference type="PATRIC" id="fig|160488.4.peg.910"/>
<dbReference type="eggNOG" id="COG0820">
    <property type="taxonomic scope" value="Bacteria"/>
</dbReference>
<dbReference type="HOGENOM" id="CLU_029101_0_0_6"/>
<dbReference type="OrthoDB" id="9793973at2"/>
<dbReference type="PhylomeDB" id="Q88PK0"/>
<dbReference type="BioCyc" id="PPUT160488:G1G01-925-MONOMER"/>
<dbReference type="Proteomes" id="UP000000556">
    <property type="component" value="Chromosome"/>
</dbReference>
<dbReference type="GO" id="GO:0005737">
    <property type="term" value="C:cytoplasm"/>
    <property type="evidence" value="ECO:0007669"/>
    <property type="project" value="UniProtKB-SubCell"/>
</dbReference>
<dbReference type="GO" id="GO:0051539">
    <property type="term" value="F:4 iron, 4 sulfur cluster binding"/>
    <property type="evidence" value="ECO:0007669"/>
    <property type="project" value="UniProtKB-UniRule"/>
</dbReference>
<dbReference type="GO" id="GO:0046872">
    <property type="term" value="F:metal ion binding"/>
    <property type="evidence" value="ECO:0007669"/>
    <property type="project" value="UniProtKB-KW"/>
</dbReference>
<dbReference type="GO" id="GO:0070040">
    <property type="term" value="F:rRNA (adenine(2503)-C2-)-methyltransferase activity"/>
    <property type="evidence" value="ECO:0007669"/>
    <property type="project" value="UniProtKB-UniRule"/>
</dbReference>
<dbReference type="GO" id="GO:0019843">
    <property type="term" value="F:rRNA binding"/>
    <property type="evidence" value="ECO:0007669"/>
    <property type="project" value="UniProtKB-UniRule"/>
</dbReference>
<dbReference type="GO" id="GO:0002935">
    <property type="term" value="F:tRNA (adenine(37)-C2)-methyltransferase activity"/>
    <property type="evidence" value="ECO:0007669"/>
    <property type="project" value="UniProtKB-UniRule"/>
</dbReference>
<dbReference type="GO" id="GO:0000049">
    <property type="term" value="F:tRNA binding"/>
    <property type="evidence" value="ECO:0007669"/>
    <property type="project" value="UniProtKB-UniRule"/>
</dbReference>
<dbReference type="GO" id="GO:0070475">
    <property type="term" value="P:rRNA base methylation"/>
    <property type="evidence" value="ECO:0007669"/>
    <property type="project" value="UniProtKB-UniRule"/>
</dbReference>
<dbReference type="GO" id="GO:0030488">
    <property type="term" value="P:tRNA methylation"/>
    <property type="evidence" value="ECO:0007669"/>
    <property type="project" value="UniProtKB-UniRule"/>
</dbReference>
<dbReference type="CDD" id="cd01335">
    <property type="entry name" value="Radical_SAM"/>
    <property type="match status" value="1"/>
</dbReference>
<dbReference type="FunFam" id="1.10.150.530:FF:000003">
    <property type="entry name" value="Dual-specificity RNA methyltransferase RlmN"/>
    <property type="match status" value="1"/>
</dbReference>
<dbReference type="FunFam" id="3.20.20.70:FF:000008">
    <property type="entry name" value="Dual-specificity RNA methyltransferase RlmN"/>
    <property type="match status" value="1"/>
</dbReference>
<dbReference type="Gene3D" id="1.10.150.530">
    <property type="match status" value="1"/>
</dbReference>
<dbReference type="Gene3D" id="3.20.20.70">
    <property type="entry name" value="Aldolase class I"/>
    <property type="match status" value="1"/>
</dbReference>
<dbReference type="HAMAP" id="MF_01849">
    <property type="entry name" value="RNA_methyltr_RlmN"/>
    <property type="match status" value="1"/>
</dbReference>
<dbReference type="InterPro" id="IPR013785">
    <property type="entry name" value="Aldolase_TIM"/>
</dbReference>
<dbReference type="InterPro" id="IPR040072">
    <property type="entry name" value="Methyltransferase_A"/>
</dbReference>
<dbReference type="InterPro" id="IPR048641">
    <property type="entry name" value="RlmN_N"/>
</dbReference>
<dbReference type="InterPro" id="IPR027492">
    <property type="entry name" value="RNA_MTrfase_RlmN"/>
</dbReference>
<dbReference type="InterPro" id="IPR004383">
    <property type="entry name" value="rRNA_lsu_MTrfase_RlmN/Cfr"/>
</dbReference>
<dbReference type="InterPro" id="IPR007197">
    <property type="entry name" value="rSAM"/>
</dbReference>
<dbReference type="NCBIfam" id="TIGR00048">
    <property type="entry name" value="rRNA_mod_RlmN"/>
    <property type="match status" value="1"/>
</dbReference>
<dbReference type="PANTHER" id="PTHR30544">
    <property type="entry name" value="23S RRNA METHYLTRANSFERASE"/>
    <property type="match status" value="1"/>
</dbReference>
<dbReference type="PANTHER" id="PTHR30544:SF5">
    <property type="entry name" value="RADICAL SAM CORE DOMAIN-CONTAINING PROTEIN"/>
    <property type="match status" value="1"/>
</dbReference>
<dbReference type="Pfam" id="PF04055">
    <property type="entry name" value="Radical_SAM"/>
    <property type="match status" value="1"/>
</dbReference>
<dbReference type="Pfam" id="PF21016">
    <property type="entry name" value="RlmN_N"/>
    <property type="match status" value="1"/>
</dbReference>
<dbReference type="PIRSF" id="PIRSF006004">
    <property type="entry name" value="CHP00048"/>
    <property type="match status" value="1"/>
</dbReference>
<dbReference type="SFLD" id="SFLDF00275">
    <property type="entry name" value="adenosine_C2_methyltransferase"/>
    <property type="match status" value="1"/>
</dbReference>
<dbReference type="SFLD" id="SFLDS00029">
    <property type="entry name" value="Radical_SAM"/>
    <property type="match status" value="1"/>
</dbReference>
<dbReference type="SUPFAM" id="SSF102114">
    <property type="entry name" value="Radical SAM enzymes"/>
    <property type="match status" value="1"/>
</dbReference>
<dbReference type="PROSITE" id="PS51918">
    <property type="entry name" value="RADICAL_SAM"/>
    <property type="match status" value="1"/>
</dbReference>
<organism>
    <name type="scientific">Pseudomonas putida (strain ATCC 47054 / DSM 6125 / CFBP 8728 / NCIMB 11950 / KT2440)</name>
    <dbReference type="NCBI Taxonomy" id="160488"/>
    <lineage>
        <taxon>Bacteria</taxon>
        <taxon>Pseudomonadati</taxon>
        <taxon>Pseudomonadota</taxon>
        <taxon>Gammaproteobacteria</taxon>
        <taxon>Pseudomonadales</taxon>
        <taxon>Pseudomonadaceae</taxon>
        <taxon>Pseudomonas</taxon>
    </lineage>
</organism>